<reference key="1">
    <citation type="journal article" date="1999" name="Nat. Genet.">
        <title>Comparative genomes of Chlamydia pneumoniae and C. trachomatis.</title>
        <authorList>
            <person name="Kalman S."/>
            <person name="Mitchell W.P."/>
            <person name="Marathe R."/>
            <person name="Lammel C.J."/>
            <person name="Fan J."/>
            <person name="Hyman R.W."/>
            <person name="Olinger L."/>
            <person name="Grimwood J."/>
            <person name="Davis R.W."/>
            <person name="Stephens R.S."/>
        </authorList>
    </citation>
    <scope>NUCLEOTIDE SEQUENCE [LARGE SCALE GENOMIC DNA]</scope>
    <source>
        <strain>CWL029</strain>
    </source>
</reference>
<reference key="2">
    <citation type="journal article" date="2000" name="Nucleic Acids Res.">
        <title>Genome sequences of Chlamydia trachomatis MoPn and Chlamydia pneumoniae AR39.</title>
        <authorList>
            <person name="Read T.D."/>
            <person name="Brunham R.C."/>
            <person name="Shen C."/>
            <person name="Gill S.R."/>
            <person name="Heidelberg J.F."/>
            <person name="White O."/>
            <person name="Hickey E.K."/>
            <person name="Peterson J.D."/>
            <person name="Utterback T.R."/>
            <person name="Berry K.J."/>
            <person name="Bass S."/>
            <person name="Linher K.D."/>
            <person name="Weidman J.F."/>
            <person name="Khouri H.M."/>
            <person name="Craven B."/>
            <person name="Bowman C."/>
            <person name="Dodson R.J."/>
            <person name="Gwinn M.L."/>
            <person name="Nelson W.C."/>
            <person name="DeBoy R.T."/>
            <person name="Kolonay J.F."/>
            <person name="McClarty G."/>
            <person name="Salzberg S.L."/>
            <person name="Eisen J.A."/>
            <person name="Fraser C.M."/>
        </authorList>
    </citation>
    <scope>NUCLEOTIDE SEQUENCE [LARGE SCALE GENOMIC DNA]</scope>
    <source>
        <strain>AR39</strain>
    </source>
</reference>
<reference key="3">
    <citation type="journal article" date="2000" name="Nucleic Acids Res.">
        <title>Comparison of whole genome sequences of Chlamydia pneumoniae J138 from Japan and CWL029 from USA.</title>
        <authorList>
            <person name="Shirai M."/>
            <person name="Hirakawa H."/>
            <person name="Kimoto M."/>
            <person name="Tabuchi M."/>
            <person name="Kishi F."/>
            <person name="Ouchi K."/>
            <person name="Shiba T."/>
            <person name="Ishii K."/>
            <person name="Hattori M."/>
            <person name="Kuhara S."/>
            <person name="Nakazawa T."/>
        </authorList>
    </citation>
    <scope>NUCLEOTIDE SEQUENCE [LARGE SCALE GENOMIC DNA]</scope>
    <source>
        <strain>J138</strain>
    </source>
</reference>
<reference key="4">
    <citation type="submission" date="2002-05" db="EMBL/GenBank/DDBJ databases">
        <title>The genome sequence of Chlamydia pneumoniae TW183 and comparison with other Chlamydia strains based on whole genome sequence analysis.</title>
        <authorList>
            <person name="Geng M.M."/>
            <person name="Schuhmacher A."/>
            <person name="Muehldorfer I."/>
            <person name="Bensch K.W."/>
            <person name="Schaefer K.P."/>
            <person name="Schneider S."/>
            <person name="Pohl T."/>
            <person name="Essig A."/>
            <person name="Marre R."/>
            <person name="Melchers K."/>
        </authorList>
    </citation>
    <scope>NUCLEOTIDE SEQUENCE [LARGE SCALE GENOMIC DNA]</scope>
    <source>
        <strain>TW-183</strain>
    </source>
</reference>
<evidence type="ECO:0000255" key="1">
    <source>
        <dbReference type="HAMAP-Rule" id="MF_00036"/>
    </source>
</evidence>
<feature type="chain" id="PRO_0000075087" description="Alanine--tRNA ligase">
    <location>
        <begin position="1"/>
        <end position="872"/>
    </location>
</feature>
<feature type="binding site" evidence="1">
    <location>
        <position position="558"/>
    </location>
    <ligand>
        <name>Zn(2+)</name>
        <dbReference type="ChEBI" id="CHEBI:29105"/>
    </ligand>
</feature>
<feature type="binding site" evidence="1">
    <location>
        <position position="562"/>
    </location>
    <ligand>
        <name>Zn(2+)</name>
        <dbReference type="ChEBI" id="CHEBI:29105"/>
    </ligand>
</feature>
<feature type="binding site" evidence="1">
    <location>
        <position position="660"/>
    </location>
    <ligand>
        <name>Zn(2+)</name>
        <dbReference type="ChEBI" id="CHEBI:29105"/>
    </ligand>
</feature>
<feature type="binding site" evidence="1">
    <location>
        <position position="664"/>
    </location>
    <ligand>
        <name>Zn(2+)</name>
        <dbReference type="ChEBI" id="CHEBI:29105"/>
    </ligand>
</feature>
<keyword id="KW-0030">Aminoacyl-tRNA synthetase</keyword>
<keyword id="KW-0067">ATP-binding</keyword>
<keyword id="KW-0963">Cytoplasm</keyword>
<keyword id="KW-0436">Ligase</keyword>
<keyword id="KW-0479">Metal-binding</keyword>
<keyword id="KW-0547">Nucleotide-binding</keyword>
<keyword id="KW-0648">Protein biosynthesis</keyword>
<keyword id="KW-0694">RNA-binding</keyword>
<keyword id="KW-0820">tRNA-binding</keyword>
<keyword id="KW-0862">Zinc</keyword>
<organism>
    <name type="scientific">Chlamydia pneumoniae</name>
    <name type="common">Chlamydophila pneumoniae</name>
    <dbReference type="NCBI Taxonomy" id="83558"/>
    <lineage>
        <taxon>Bacteria</taxon>
        <taxon>Pseudomonadati</taxon>
        <taxon>Chlamydiota</taxon>
        <taxon>Chlamydiia</taxon>
        <taxon>Chlamydiales</taxon>
        <taxon>Chlamydiaceae</taxon>
        <taxon>Chlamydia/Chlamydophila group</taxon>
        <taxon>Chlamydia</taxon>
    </lineage>
</organism>
<gene>
    <name evidence="1" type="primary">alaS</name>
    <name type="ordered locus">CPn_0892</name>
    <name type="ordered locus">CP_0974</name>
    <name type="ordered locus">CpB0923</name>
</gene>
<comment type="function">
    <text evidence="1">Catalyzes the attachment of alanine to tRNA(Ala) in a two-step reaction: alanine is first activated by ATP to form Ala-AMP and then transferred to the acceptor end of tRNA(Ala). Also edits incorrectly charged Ser-tRNA(Ala) and Gly-tRNA(Ala) via its editing domain.</text>
</comment>
<comment type="catalytic activity">
    <reaction evidence="1">
        <text>tRNA(Ala) + L-alanine + ATP = L-alanyl-tRNA(Ala) + AMP + diphosphate</text>
        <dbReference type="Rhea" id="RHEA:12540"/>
        <dbReference type="Rhea" id="RHEA-COMP:9657"/>
        <dbReference type="Rhea" id="RHEA-COMP:9923"/>
        <dbReference type="ChEBI" id="CHEBI:30616"/>
        <dbReference type="ChEBI" id="CHEBI:33019"/>
        <dbReference type="ChEBI" id="CHEBI:57972"/>
        <dbReference type="ChEBI" id="CHEBI:78442"/>
        <dbReference type="ChEBI" id="CHEBI:78497"/>
        <dbReference type="ChEBI" id="CHEBI:456215"/>
        <dbReference type="EC" id="6.1.1.7"/>
    </reaction>
</comment>
<comment type="cofactor">
    <cofactor evidence="1">
        <name>Zn(2+)</name>
        <dbReference type="ChEBI" id="CHEBI:29105"/>
    </cofactor>
    <text evidence="1">Binds 1 zinc ion per subunit.</text>
</comment>
<comment type="subcellular location">
    <subcellularLocation>
        <location evidence="1">Cytoplasm</location>
    </subcellularLocation>
</comment>
<comment type="domain">
    <text evidence="1">Consists of three domains; the N-terminal catalytic domain, the editing domain and the C-terminal C-Ala domain. The editing domain removes incorrectly charged amino acids, while the C-Ala domain, along with tRNA(Ala), serves as a bridge to cooperatively bring together the editing and aminoacylation centers thus stimulating deacylation of misacylated tRNAs.</text>
</comment>
<comment type="similarity">
    <text evidence="1">Belongs to the class-II aminoacyl-tRNA synthetase family.</text>
</comment>
<accession>Q9Z714</accession>
<accession>Q9JQE1</accession>
<sequence length="872" mass="97670">MLSNTIRSNFLKFYANRHHTILPSSPVFPHNDPSILFTNAGMNQFKDIFLNKEKVSYSRATTSQKCIRAGGKHNDLDNVGHTSRHLTFFEMLGNFSFGDYFKAEAIAFAWEVSLSVFNFNPEGIYATVHEKDDEAFALWEAYLPTDRIFRLTDKDNFWSMANTGPCGYCSELLFDRGPSFGNASSPLDDTDGERFLEYWNLVFMEFNRTSEGSLLALPNKHVDTGAGLERLVSLIAGTHTVFEADVLRELIAKTEQLSGKVYHPDDSGAAFRVIADHVRSLSFAIADGLLPGNTERGYVLRKILRRSVNYGRRLGFRNPFLAEIVPSLADAMGEAYPELKNSLSQIQKVLTLEEESFFKTLDRGGNLLQQVLKSSSSSSCISGEDAFKLKDTYGMPIDEISLLAKDYDYSVDMDTFHKLEQEAKERSRKNVVQSQGTSESIYNELHLTSEFIGYDHLSCDTFIEAIISKDHIVSSLQEKQEGAIVLKVSPFYAEKGGQVGDSGEIFCSEGTFIVTHTTSPKAGLIVHHGRISQGSLTVEAAVTAQVNRYRRKRIANNHTACHLLHKALEITLGDHIRQAGSYVDDTKIRLDFTHPQAISPEDLLCIETLVNESIRENEPVDIREALYSDVMNSSEIKQFFGDKYSDVVRVVSAGHSHELCGGTHAEATGDIGFFRITKEHAVAMGIRRIEAVTGEKAEATVHQQSEVLEEIATLLQVPRDQIVSRLTATLDERKQQDKRLNELENSLIQTKLDKLIHNCHQRQGITCLVHHLAEHENHRLQQYAQCLHQRIPEKLISLWTTEKNGKYIVLSRVSDDLITQGVHAQDLLKAVLTPCGGRWGGKDQSAQGSAPALPATEVLNETLWQWISTQLI</sequence>
<name>SYA_CHLPN</name>
<proteinExistence type="inferred from homology"/>
<dbReference type="EC" id="6.1.1.7" evidence="1"/>
<dbReference type="EMBL" id="AE001363">
    <property type="protein sequence ID" value="AAD19030.1"/>
    <property type="molecule type" value="Genomic_DNA"/>
</dbReference>
<dbReference type="EMBL" id="AE002161">
    <property type="protein sequence ID" value="AAF38754.1"/>
    <property type="molecule type" value="Genomic_DNA"/>
</dbReference>
<dbReference type="EMBL" id="BA000008">
    <property type="protein sequence ID" value="BAA99100.1"/>
    <property type="molecule type" value="Genomic_DNA"/>
</dbReference>
<dbReference type="EMBL" id="AE009440">
    <property type="protein sequence ID" value="AAP98852.1"/>
    <property type="molecule type" value="Genomic_DNA"/>
</dbReference>
<dbReference type="PIR" id="B86602">
    <property type="entry name" value="B86602"/>
</dbReference>
<dbReference type="PIR" id="H72023">
    <property type="entry name" value="H72023"/>
</dbReference>
<dbReference type="RefSeq" id="NP_225087.1">
    <property type="nucleotide sequence ID" value="NC_000922.1"/>
</dbReference>
<dbReference type="RefSeq" id="WP_010883527.1">
    <property type="nucleotide sequence ID" value="NZ_LN847257.1"/>
</dbReference>
<dbReference type="SMR" id="Q9Z714"/>
<dbReference type="STRING" id="406984.CPK_ORF00303"/>
<dbReference type="GeneID" id="45050947"/>
<dbReference type="KEGG" id="cpa:CP_0974"/>
<dbReference type="KEGG" id="cpj:alaS"/>
<dbReference type="KEGG" id="cpn:CPn_0892"/>
<dbReference type="KEGG" id="cpt:CpB0923"/>
<dbReference type="PATRIC" id="fig|115713.3.peg.973"/>
<dbReference type="eggNOG" id="COG0013">
    <property type="taxonomic scope" value="Bacteria"/>
</dbReference>
<dbReference type="HOGENOM" id="CLU_004485_1_1_0"/>
<dbReference type="OMA" id="NKKDNFW"/>
<dbReference type="OrthoDB" id="9803884at2"/>
<dbReference type="Proteomes" id="UP000000583">
    <property type="component" value="Chromosome"/>
</dbReference>
<dbReference type="Proteomes" id="UP000000801">
    <property type="component" value="Chromosome"/>
</dbReference>
<dbReference type="GO" id="GO:0005829">
    <property type="term" value="C:cytosol"/>
    <property type="evidence" value="ECO:0007669"/>
    <property type="project" value="TreeGrafter"/>
</dbReference>
<dbReference type="GO" id="GO:0004813">
    <property type="term" value="F:alanine-tRNA ligase activity"/>
    <property type="evidence" value="ECO:0007669"/>
    <property type="project" value="UniProtKB-UniRule"/>
</dbReference>
<dbReference type="GO" id="GO:0002161">
    <property type="term" value="F:aminoacyl-tRNA deacylase activity"/>
    <property type="evidence" value="ECO:0007669"/>
    <property type="project" value="TreeGrafter"/>
</dbReference>
<dbReference type="GO" id="GO:0005524">
    <property type="term" value="F:ATP binding"/>
    <property type="evidence" value="ECO:0007669"/>
    <property type="project" value="UniProtKB-UniRule"/>
</dbReference>
<dbReference type="GO" id="GO:0000049">
    <property type="term" value="F:tRNA binding"/>
    <property type="evidence" value="ECO:0007669"/>
    <property type="project" value="UniProtKB-KW"/>
</dbReference>
<dbReference type="GO" id="GO:0008270">
    <property type="term" value="F:zinc ion binding"/>
    <property type="evidence" value="ECO:0007669"/>
    <property type="project" value="UniProtKB-UniRule"/>
</dbReference>
<dbReference type="GO" id="GO:0006419">
    <property type="term" value="P:alanyl-tRNA aminoacylation"/>
    <property type="evidence" value="ECO:0007669"/>
    <property type="project" value="UniProtKB-UniRule"/>
</dbReference>
<dbReference type="CDD" id="cd00673">
    <property type="entry name" value="AlaRS_core"/>
    <property type="match status" value="1"/>
</dbReference>
<dbReference type="FunFam" id="2.40.30.130:FF:000001">
    <property type="entry name" value="Alanine--tRNA ligase"/>
    <property type="match status" value="1"/>
</dbReference>
<dbReference type="FunFam" id="3.10.310.40:FF:000001">
    <property type="entry name" value="Alanine--tRNA ligase"/>
    <property type="match status" value="1"/>
</dbReference>
<dbReference type="FunFam" id="3.30.930.10:FF:000004">
    <property type="entry name" value="Alanine--tRNA ligase"/>
    <property type="match status" value="1"/>
</dbReference>
<dbReference type="FunFam" id="3.30.980.10:FF:000004">
    <property type="entry name" value="Alanine--tRNA ligase, cytoplasmic"/>
    <property type="match status" value="1"/>
</dbReference>
<dbReference type="Gene3D" id="2.40.30.130">
    <property type="match status" value="1"/>
</dbReference>
<dbReference type="Gene3D" id="3.10.310.40">
    <property type="match status" value="1"/>
</dbReference>
<dbReference type="Gene3D" id="3.30.54.20">
    <property type="match status" value="1"/>
</dbReference>
<dbReference type="Gene3D" id="6.10.250.550">
    <property type="match status" value="1"/>
</dbReference>
<dbReference type="Gene3D" id="3.30.930.10">
    <property type="entry name" value="Bira Bifunctional Protein, Domain 2"/>
    <property type="match status" value="1"/>
</dbReference>
<dbReference type="Gene3D" id="3.30.980.10">
    <property type="entry name" value="Threonyl-trna Synthetase, Chain A, domain 2"/>
    <property type="match status" value="1"/>
</dbReference>
<dbReference type="HAMAP" id="MF_00036_B">
    <property type="entry name" value="Ala_tRNA_synth_B"/>
    <property type="match status" value="1"/>
</dbReference>
<dbReference type="InterPro" id="IPR045864">
    <property type="entry name" value="aa-tRNA-synth_II/BPL/LPL"/>
</dbReference>
<dbReference type="InterPro" id="IPR002318">
    <property type="entry name" value="Ala-tRNA-lgiase_IIc"/>
</dbReference>
<dbReference type="InterPro" id="IPR018162">
    <property type="entry name" value="Ala-tRNA-ligase_IIc_anticod-bd"/>
</dbReference>
<dbReference type="InterPro" id="IPR018165">
    <property type="entry name" value="Ala-tRNA-synth_IIc_core"/>
</dbReference>
<dbReference type="InterPro" id="IPR018164">
    <property type="entry name" value="Ala-tRNA-synth_IIc_N"/>
</dbReference>
<dbReference type="InterPro" id="IPR050058">
    <property type="entry name" value="Ala-tRNA_ligase"/>
</dbReference>
<dbReference type="InterPro" id="IPR023033">
    <property type="entry name" value="Ala_tRNA_ligase_euk/bac"/>
</dbReference>
<dbReference type="InterPro" id="IPR003156">
    <property type="entry name" value="DHHA1_dom"/>
</dbReference>
<dbReference type="InterPro" id="IPR018163">
    <property type="entry name" value="Thr/Ala-tRNA-synth_IIc_edit"/>
</dbReference>
<dbReference type="InterPro" id="IPR009000">
    <property type="entry name" value="Transl_B-barrel_sf"/>
</dbReference>
<dbReference type="InterPro" id="IPR012947">
    <property type="entry name" value="tRNA_SAD"/>
</dbReference>
<dbReference type="NCBIfam" id="TIGR00344">
    <property type="entry name" value="alaS"/>
    <property type="match status" value="1"/>
</dbReference>
<dbReference type="PANTHER" id="PTHR11777:SF9">
    <property type="entry name" value="ALANINE--TRNA LIGASE, CYTOPLASMIC"/>
    <property type="match status" value="1"/>
</dbReference>
<dbReference type="PANTHER" id="PTHR11777">
    <property type="entry name" value="ALANYL-TRNA SYNTHETASE"/>
    <property type="match status" value="1"/>
</dbReference>
<dbReference type="Pfam" id="PF02272">
    <property type="entry name" value="DHHA1"/>
    <property type="match status" value="1"/>
</dbReference>
<dbReference type="Pfam" id="PF01411">
    <property type="entry name" value="tRNA-synt_2c"/>
    <property type="match status" value="1"/>
</dbReference>
<dbReference type="Pfam" id="PF07973">
    <property type="entry name" value="tRNA_SAD"/>
    <property type="match status" value="1"/>
</dbReference>
<dbReference type="PRINTS" id="PR00980">
    <property type="entry name" value="TRNASYNTHALA"/>
</dbReference>
<dbReference type="SMART" id="SM00863">
    <property type="entry name" value="tRNA_SAD"/>
    <property type="match status" value="1"/>
</dbReference>
<dbReference type="SUPFAM" id="SSF55681">
    <property type="entry name" value="Class II aaRS and biotin synthetases"/>
    <property type="match status" value="1"/>
</dbReference>
<dbReference type="SUPFAM" id="SSF101353">
    <property type="entry name" value="Putative anticodon-binding domain of alanyl-tRNA synthetase (AlaRS)"/>
    <property type="match status" value="1"/>
</dbReference>
<dbReference type="SUPFAM" id="SSF55186">
    <property type="entry name" value="ThrRS/AlaRS common domain"/>
    <property type="match status" value="1"/>
</dbReference>
<dbReference type="SUPFAM" id="SSF50447">
    <property type="entry name" value="Translation proteins"/>
    <property type="match status" value="1"/>
</dbReference>
<dbReference type="PROSITE" id="PS50860">
    <property type="entry name" value="AA_TRNA_LIGASE_II_ALA"/>
    <property type="match status" value="1"/>
</dbReference>
<protein>
    <recommendedName>
        <fullName evidence="1">Alanine--tRNA ligase</fullName>
        <ecNumber evidence="1">6.1.1.7</ecNumber>
    </recommendedName>
    <alternativeName>
        <fullName evidence="1">Alanyl-tRNA synthetase</fullName>
        <shortName evidence="1">AlaRS</shortName>
    </alternativeName>
</protein>